<accession>Q8R757</accession>
<feature type="chain" id="PRO_0000187844" description="Peptidyl-tRNA hydrolase">
    <location>
        <begin position="1"/>
        <end position="185"/>
    </location>
</feature>
<feature type="active site" description="Proton acceptor" evidence="1">
    <location>
        <position position="19"/>
    </location>
</feature>
<feature type="binding site" evidence="1">
    <location>
        <position position="14"/>
    </location>
    <ligand>
        <name>tRNA</name>
        <dbReference type="ChEBI" id="CHEBI:17843"/>
    </ligand>
</feature>
<feature type="binding site" evidence="1">
    <location>
        <position position="64"/>
    </location>
    <ligand>
        <name>tRNA</name>
        <dbReference type="ChEBI" id="CHEBI:17843"/>
    </ligand>
</feature>
<feature type="binding site" evidence="1">
    <location>
        <position position="66"/>
    </location>
    <ligand>
        <name>tRNA</name>
        <dbReference type="ChEBI" id="CHEBI:17843"/>
    </ligand>
</feature>
<feature type="binding site" evidence="1">
    <location>
        <position position="112"/>
    </location>
    <ligand>
        <name>tRNA</name>
        <dbReference type="ChEBI" id="CHEBI:17843"/>
    </ligand>
</feature>
<feature type="site" description="Discriminates between blocked and unblocked aminoacyl-tRNA" evidence="1">
    <location>
        <position position="9"/>
    </location>
</feature>
<feature type="site" description="Stabilizes the basic form of H active site to accept a proton" evidence="1">
    <location>
        <position position="91"/>
    </location>
</feature>
<evidence type="ECO:0000255" key="1">
    <source>
        <dbReference type="HAMAP-Rule" id="MF_00083"/>
    </source>
</evidence>
<organism>
    <name type="scientific">Caldanaerobacter subterraneus subsp. tengcongensis (strain DSM 15242 / JCM 11007 / NBRC 100824 / MB4)</name>
    <name type="common">Thermoanaerobacter tengcongensis</name>
    <dbReference type="NCBI Taxonomy" id="273068"/>
    <lineage>
        <taxon>Bacteria</taxon>
        <taxon>Bacillati</taxon>
        <taxon>Bacillota</taxon>
        <taxon>Clostridia</taxon>
        <taxon>Thermoanaerobacterales</taxon>
        <taxon>Thermoanaerobacteraceae</taxon>
        <taxon>Caldanaerobacter</taxon>
    </lineage>
</organism>
<gene>
    <name evidence="1" type="primary">pth</name>
    <name type="ordered locus">TTE2567</name>
</gene>
<proteinExistence type="inferred from homology"/>
<keyword id="KW-0963">Cytoplasm</keyword>
<keyword id="KW-0378">Hydrolase</keyword>
<keyword id="KW-1185">Reference proteome</keyword>
<keyword id="KW-0694">RNA-binding</keyword>
<keyword id="KW-0820">tRNA-binding</keyword>
<sequence length="185" mass="20654">MYIIAGLGNPGKEYEGTRHNVGFMVIDALSKKLGIEVSRLKFKSLMGEGHFKGEKVILLKPQTFMNLSGEALYDAVNFYKIPLENVIVVYDDKDLEVGKIRIRRKGSSGGHNGMNSIIYLLNSEDFPRVRIGIGKPEDGDLVRHVLGRFSDEEKKVIDEAVERAAEAVIDIMENGIEHAMSRFNG</sequence>
<protein>
    <recommendedName>
        <fullName evidence="1">Peptidyl-tRNA hydrolase</fullName>
        <shortName evidence="1">Pth</shortName>
        <ecNumber evidence="1">3.1.1.29</ecNumber>
    </recommendedName>
</protein>
<name>PTH_CALS4</name>
<comment type="function">
    <text evidence="1">Hydrolyzes ribosome-free peptidyl-tRNAs (with 1 or more amino acids incorporated), which drop off the ribosome during protein synthesis, or as a result of ribosome stalling.</text>
</comment>
<comment type="function">
    <text evidence="1">Catalyzes the release of premature peptidyl moieties from peptidyl-tRNA molecules trapped in stalled 50S ribosomal subunits, and thus maintains levels of free tRNAs and 50S ribosomes.</text>
</comment>
<comment type="catalytic activity">
    <reaction evidence="1">
        <text>an N-acyl-L-alpha-aminoacyl-tRNA + H2O = an N-acyl-L-amino acid + a tRNA + H(+)</text>
        <dbReference type="Rhea" id="RHEA:54448"/>
        <dbReference type="Rhea" id="RHEA-COMP:10123"/>
        <dbReference type="Rhea" id="RHEA-COMP:13883"/>
        <dbReference type="ChEBI" id="CHEBI:15377"/>
        <dbReference type="ChEBI" id="CHEBI:15378"/>
        <dbReference type="ChEBI" id="CHEBI:59874"/>
        <dbReference type="ChEBI" id="CHEBI:78442"/>
        <dbReference type="ChEBI" id="CHEBI:138191"/>
        <dbReference type="EC" id="3.1.1.29"/>
    </reaction>
</comment>
<comment type="subunit">
    <text evidence="1">Monomer.</text>
</comment>
<comment type="subcellular location">
    <subcellularLocation>
        <location evidence="1">Cytoplasm</location>
    </subcellularLocation>
</comment>
<comment type="similarity">
    <text evidence="1">Belongs to the PTH family.</text>
</comment>
<reference key="1">
    <citation type="journal article" date="2002" name="Genome Res.">
        <title>A complete sequence of the T. tengcongensis genome.</title>
        <authorList>
            <person name="Bao Q."/>
            <person name="Tian Y."/>
            <person name="Li W."/>
            <person name="Xu Z."/>
            <person name="Xuan Z."/>
            <person name="Hu S."/>
            <person name="Dong W."/>
            <person name="Yang J."/>
            <person name="Chen Y."/>
            <person name="Xue Y."/>
            <person name="Xu Y."/>
            <person name="Lai X."/>
            <person name="Huang L."/>
            <person name="Dong X."/>
            <person name="Ma Y."/>
            <person name="Ling L."/>
            <person name="Tan H."/>
            <person name="Chen R."/>
            <person name="Wang J."/>
            <person name="Yu J."/>
            <person name="Yang H."/>
        </authorList>
    </citation>
    <scope>NUCLEOTIDE SEQUENCE [LARGE SCALE GENOMIC DNA]</scope>
    <source>
        <strain>DSM 15242 / JCM 11007 / NBRC 100824 / MB4</strain>
    </source>
</reference>
<dbReference type="EC" id="3.1.1.29" evidence="1"/>
<dbReference type="EMBL" id="AE008691">
    <property type="protein sequence ID" value="AAM25691.1"/>
    <property type="molecule type" value="Genomic_DNA"/>
</dbReference>
<dbReference type="RefSeq" id="WP_011026568.1">
    <property type="nucleotide sequence ID" value="NC_003869.1"/>
</dbReference>
<dbReference type="SMR" id="Q8R757"/>
<dbReference type="STRING" id="273068.TTE2567"/>
<dbReference type="KEGG" id="tte:TTE2567"/>
<dbReference type="eggNOG" id="COG0193">
    <property type="taxonomic scope" value="Bacteria"/>
</dbReference>
<dbReference type="HOGENOM" id="CLU_062456_4_1_9"/>
<dbReference type="OrthoDB" id="9800507at2"/>
<dbReference type="Proteomes" id="UP000000555">
    <property type="component" value="Chromosome"/>
</dbReference>
<dbReference type="GO" id="GO:0005737">
    <property type="term" value="C:cytoplasm"/>
    <property type="evidence" value="ECO:0007669"/>
    <property type="project" value="UniProtKB-SubCell"/>
</dbReference>
<dbReference type="GO" id="GO:0004045">
    <property type="term" value="F:peptidyl-tRNA hydrolase activity"/>
    <property type="evidence" value="ECO:0007669"/>
    <property type="project" value="UniProtKB-UniRule"/>
</dbReference>
<dbReference type="GO" id="GO:0000049">
    <property type="term" value="F:tRNA binding"/>
    <property type="evidence" value="ECO:0007669"/>
    <property type="project" value="UniProtKB-UniRule"/>
</dbReference>
<dbReference type="GO" id="GO:0006515">
    <property type="term" value="P:protein quality control for misfolded or incompletely synthesized proteins"/>
    <property type="evidence" value="ECO:0007669"/>
    <property type="project" value="UniProtKB-UniRule"/>
</dbReference>
<dbReference type="GO" id="GO:0072344">
    <property type="term" value="P:rescue of stalled ribosome"/>
    <property type="evidence" value="ECO:0007669"/>
    <property type="project" value="UniProtKB-UniRule"/>
</dbReference>
<dbReference type="CDD" id="cd00462">
    <property type="entry name" value="PTH"/>
    <property type="match status" value="1"/>
</dbReference>
<dbReference type="FunFam" id="3.40.50.1470:FF:000001">
    <property type="entry name" value="Peptidyl-tRNA hydrolase"/>
    <property type="match status" value="1"/>
</dbReference>
<dbReference type="Gene3D" id="3.40.50.1470">
    <property type="entry name" value="Peptidyl-tRNA hydrolase"/>
    <property type="match status" value="1"/>
</dbReference>
<dbReference type="HAMAP" id="MF_00083">
    <property type="entry name" value="Pept_tRNA_hydro_bact"/>
    <property type="match status" value="1"/>
</dbReference>
<dbReference type="InterPro" id="IPR001328">
    <property type="entry name" value="Pept_tRNA_hydro"/>
</dbReference>
<dbReference type="InterPro" id="IPR018171">
    <property type="entry name" value="Pept_tRNA_hydro_CS"/>
</dbReference>
<dbReference type="InterPro" id="IPR036416">
    <property type="entry name" value="Pept_tRNA_hydro_sf"/>
</dbReference>
<dbReference type="NCBIfam" id="TIGR00447">
    <property type="entry name" value="pth"/>
    <property type="match status" value="1"/>
</dbReference>
<dbReference type="PANTHER" id="PTHR17224">
    <property type="entry name" value="PEPTIDYL-TRNA HYDROLASE"/>
    <property type="match status" value="1"/>
</dbReference>
<dbReference type="PANTHER" id="PTHR17224:SF1">
    <property type="entry name" value="PEPTIDYL-TRNA HYDROLASE"/>
    <property type="match status" value="1"/>
</dbReference>
<dbReference type="Pfam" id="PF01195">
    <property type="entry name" value="Pept_tRNA_hydro"/>
    <property type="match status" value="1"/>
</dbReference>
<dbReference type="SUPFAM" id="SSF53178">
    <property type="entry name" value="Peptidyl-tRNA hydrolase-like"/>
    <property type="match status" value="1"/>
</dbReference>
<dbReference type="PROSITE" id="PS01195">
    <property type="entry name" value="PEPT_TRNA_HYDROL_1"/>
    <property type="match status" value="1"/>
</dbReference>